<organism>
    <name type="scientific">Anaeromyxobacter sp. (strain K)</name>
    <dbReference type="NCBI Taxonomy" id="447217"/>
    <lineage>
        <taxon>Bacteria</taxon>
        <taxon>Pseudomonadati</taxon>
        <taxon>Myxococcota</taxon>
        <taxon>Myxococcia</taxon>
        <taxon>Myxococcales</taxon>
        <taxon>Cystobacterineae</taxon>
        <taxon>Anaeromyxobacteraceae</taxon>
        <taxon>Anaeromyxobacter</taxon>
    </lineage>
</organism>
<gene>
    <name evidence="1" type="primary">atpG</name>
    <name type="ordered locus">AnaeK_4485</name>
</gene>
<evidence type="ECO:0000255" key="1">
    <source>
        <dbReference type="HAMAP-Rule" id="MF_00815"/>
    </source>
</evidence>
<dbReference type="EMBL" id="CP001131">
    <property type="protein sequence ID" value="ACG75687.1"/>
    <property type="molecule type" value="Genomic_DNA"/>
</dbReference>
<dbReference type="RefSeq" id="WP_012528430.1">
    <property type="nucleotide sequence ID" value="NC_011145.1"/>
</dbReference>
<dbReference type="SMR" id="B4UKF1"/>
<dbReference type="KEGG" id="ank:AnaeK_4485"/>
<dbReference type="HOGENOM" id="CLU_050669_0_1_7"/>
<dbReference type="OrthoDB" id="9812769at2"/>
<dbReference type="Proteomes" id="UP000001871">
    <property type="component" value="Chromosome"/>
</dbReference>
<dbReference type="GO" id="GO:0005886">
    <property type="term" value="C:plasma membrane"/>
    <property type="evidence" value="ECO:0007669"/>
    <property type="project" value="UniProtKB-SubCell"/>
</dbReference>
<dbReference type="GO" id="GO:0045259">
    <property type="term" value="C:proton-transporting ATP synthase complex"/>
    <property type="evidence" value="ECO:0007669"/>
    <property type="project" value="UniProtKB-KW"/>
</dbReference>
<dbReference type="GO" id="GO:0005524">
    <property type="term" value="F:ATP binding"/>
    <property type="evidence" value="ECO:0007669"/>
    <property type="project" value="UniProtKB-UniRule"/>
</dbReference>
<dbReference type="GO" id="GO:0046933">
    <property type="term" value="F:proton-transporting ATP synthase activity, rotational mechanism"/>
    <property type="evidence" value="ECO:0007669"/>
    <property type="project" value="UniProtKB-UniRule"/>
</dbReference>
<dbReference type="GO" id="GO:0042777">
    <property type="term" value="P:proton motive force-driven plasma membrane ATP synthesis"/>
    <property type="evidence" value="ECO:0007669"/>
    <property type="project" value="UniProtKB-UniRule"/>
</dbReference>
<dbReference type="CDD" id="cd12151">
    <property type="entry name" value="F1-ATPase_gamma"/>
    <property type="match status" value="1"/>
</dbReference>
<dbReference type="FunFam" id="1.10.287.80:FF:000003">
    <property type="entry name" value="ATP synthase gamma chain, chloroplastic"/>
    <property type="match status" value="1"/>
</dbReference>
<dbReference type="Gene3D" id="3.40.1380.10">
    <property type="match status" value="1"/>
</dbReference>
<dbReference type="Gene3D" id="1.10.287.80">
    <property type="entry name" value="ATP synthase, gamma subunit, helix hairpin domain"/>
    <property type="match status" value="2"/>
</dbReference>
<dbReference type="HAMAP" id="MF_00815">
    <property type="entry name" value="ATP_synth_gamma_bact"/>
    <property type="match status" value="1"/>
</dbReference>
<dbReference type="InterPro" id="IPR035968">
    <property type="entry name" value="ATP_synth_F1_ATPase_gsu"/>
</dbReference>
<dbReference type="InterPro" id="IPR000131">
    <property type="entry name" value="ATP_synth_F1_gsu"/>
</dbReference>
<dbReference type="InterPro" id="IPR023632">
    <property type="entry name" value="ATP_synth_F1_gsu_CS"/>
</dbReference>
<dbReference type="NCBIfam" id="TIGR01146">
    <property type="entry name" value="ATPsyn_F1gamma"/>
    <property type="match status" value="1"/>
</dbReference>
<dbReference type="PANTHER" id="PTHR11693">
    <property type="entry name" value="ATP SYNTHASE GAMMA CHAIN"/>
    <property type="match status" value="1"/>
</dbReference>
<dbReference type="PANTHER" id="PTHR11693:SF22">
    <property type="entry name" value="ATP SYNTHASE SUBUNIT GAMMA, MITOCHONDRIAL"/>
    <property type="match status" value="1"/>
</dbReference>
<dbReference type="Pfam" id="PF00231">
    <property type="entry name" value="ATP-synt"/>
    <property type="match status" value="1"/>
</dbReference>
<dbReference type="PRINTS" id="PR00126">
    <property type="entry name" value="ATPASEGAMMA"/>
</dbReference>
<dbReference type="SUPFAM" id="SSF52943">
    <property type="entry name" value="ATP synthase (F1-ATPase), gamma subunit"/>
    <property type="match status" value="1"/>
</dbReference>
<dbReference type="PROSITE" id="PS00153">
    <property type="entry name" value="ATPASE_GAMMA"/>
    <property type="match status" value="1"/>
</dbReference>
<sequence>MPSLRDIRNRIGSVRSTRQITKAMKMVSAAKLRRAQDAVLKTRPYAVLLDQTLSRLAARAAAEEQVAHPLLAPRAQRTAEVVVVTSDRGLAGGFNSNICRFVQRFLTENADRFERIALSTVGKKGREYFKARRLEIRKDYTGVHANLAYEKAEALAREATERYLAGEVDAVFLAYNEFKSAISQKQVVVQLLPIDTSAAGADATGIDFKYEPSREALLAELLPRHVAMQVWRALLESAASEHGARMSAMESATKNAEEMIASLSLQYNRARQAYVTKELMEIVGGAEALK</sequence>
<feature type="chain" id="PRO_1000134106" description="ATP synthase gamma chain">
    <location>
        <begin position="1"/>
        <end position="290"/>
    </location>
</feature>
<keyword id="KW-0066">ATP synthesis</keyword>
<keyword id="KW-0997">Cell inner membrane</keyword>
<keyword id="KW-1003">Cell membrane</keyword>
<keyword id="KW-0139">CF(1)</keyword>
<keyword id="KW-0375">Hydrogen ion transport</keyword>
<keyword id="KW-0406">Ion transport</keyword>
<keyword id="KW-0472">Membrane</keyword>
<keyword id="KW-0813">Transport</keyword>
<proteinExistence type="inferred from homology"/>
<accession>B4UKF1</accession>
<protein>
    <recommendedName>
        <fullName evidence="1">ATP synthase gamma chain</fullName>
    </recommendedName>
    <alternativeName>
        <fullName evidence="1">ATP synthase F1 sector gamma subunit</fullName>
    </alternativeName>
    <alternativeName>
        <fullName evidence="1">F-ATPase gamma subunit</fullName>
    </alternativeName>
</protein>
<name>ATPG_ANASK</name>
<comment type="function">
    <text evidence="1">Produces ATP from ADP in the presence of a proton gradient across the membrane. The gamma chain is believed to be important in regulating ATPase activity and the flow of protons through the CF(0) complex.</text>
</comment>
<comment type="subunit">
    <text evidence="1">F-type ATPases have 2 components, CF(1) - the catalytic core - and CF(0) - the membrane proton channel. CF(1) has five subunits: alpha(3), beta(3), gamma(1), delta(1), epsilon(1). CF(0) has three main subunits: a, b and c.</text>
</comment>
<comment type="subcellular location">
    <subcellularLocation>
        <location evidence="1">Cell inner membrane</location>
        <topology evidence="1">Peripheral membrane protein</topology>
    </subcellularLocation>
</comment>
<comment type="similarity">
    <text evidence="1">Belongs to the ATPase gamma chain family.</text>
</comment>
<reference key="1">
    <citation type="submission" date="2008-08" db="EMBL/GenBank/DDBJ databases">
        <title>Complete sequence of Anaeromyxobacter sp. K.</title>
        <authorList>
            <consortium name="US DOE Joint Genome Institute"/>
            <person name="Lucas S."/>
            <person name="Copeland A."/>
            <person name="Lapidus A."/>
            <person name="Glavina del Rio T."/>
            <person name="Dalin E."/>
            <person name="Tice H."/>
            <person name="Bruce D."/>
            <person name="Goodwin L."/>
            <person name="Pitluck S."/>
            <person name="Saunders E."/>
            <person name="Brettin T."/>
            <person name="Detter J.C."/>
            <person name="Han C."/>
            <person name="Larimer F."/>
            <person name="Land M."/>
            <person name="Hauser L."/>
            <person name="Kyrpides N."/>
            <person name="Ovchinnikiva G."/>
            <person name="Beliaev A."/>
        </authorList>
    </citation>
    <scope>NUCLEOTIDE SEQUENCE [LARGE SCALE GENOMIC DNA]</scope>
    <source>
        <strain>K</strain>
    </source>
</reference>